<comment type="catalytic activity">
    <reaction evidence="1">
        <text>tRNA(Gly) + glycine + ATP = glycyl-tRNA(Gly) + AMP + diphosphate</text>
        <dbReference type="Rhea" id="RHEA:16013"/>
        <dbReference type="Rhea" id="RHEA-COMP:9664"/>
        <dbReference type="Rhea" id="RHEA-COMP:9683"/>
        <dbReference type="ChEBI" id="CHEBI:30616"/>
        <dbReference type="ChEBI" id="CHEBI:33019"/>
        <dbReference type="ChEBI" id="CHEBI:57305"/>
        <dbReference type="ChEBI" id="CHEBI:78442"/>
        <dbReference type="ChEBI" id="CHEBI:78522"/>
        <dbReference type="ChEBI" id="CHEBI:456215"/>
        <dbReference type="EC" id="6.1.1.14"/>
    </reaction>
</comment>
<comment type="subunit">
    <text evidence="1">Tetramer of two alpha and two beta subunits.</text>
</comment>
<comment type="subcellular location">
    <subcellularLocation>
        <location evidence="1">Cytoplasm</location>
    </subcellularLocation>
</comment>
<comment type="similarity">
    <text evidence="1">Belongs to the class-II aminoacyl-tRNA synthetase family.</text>
</comment>
<name>SYGB_PEDPA</name>
<keyword id="KW-0030">Aminoacyl-tRNA synthetase</keyword>
<keyword id="KW-0067">ATP-binding</keyword>
<keyword id="KW-0963">Cytoplasm</keyword>
<keyword id="KW-0436">Ligase</keyword>
<keyword id="KW-0547">Nucleotide-binding</keyword>
<keyword id="KW-0648">Protein biosynthesis</keyword>
<protein>
    <recommendedName>
        <fullName evidence="1">Glycine--tRNA ligase beta subunit</fullName>
        <ecNumber evidence="1">6.1.1.14</ecNumber>
    </recommendedName>
    <alternativeName>
        <fullName evidence="1">Glycyl-tRNA synthetase beta subunit</fullName>
        <shortName evidence="1">GlyRS</shortName>
    </alternativeName>
</protein>
<feature type="chain" id="PRO_1000006381" description="Glycine--tRNA ligase beta subunit">
    <location>
        <begin position="1"/>
        <end position="690"/>
    </location>
</feature>
<dbReference type="EC" id="6.1.1.14" evidence="1"/>
<dbReference type="EMBL" id="CP000422">
    <property type="protein sequence ID" value="ABJ68156.1"/>
    <property type="molecule type" value="Genomic_DNA"/>
</dbReference>
<dbReference type="RefSeq" id="WP_011673491.1">
    <property type="nucleotide sequence ID" value="NC_008525.1"/>
</dbReference>
<dbReference type="SMR" id="Q03F66"/>
<dbReference type="STRING" id="278197.PEPE_1101"/>
<dbReference type="GeneID" id="33062734"/>
<dbReference type="KEGG" id="ppe:PEPE_1101"/>
<dbReference type="eggNOG" id="COG0751">
    <property type="taxonomic scope" value="Bacteria"/>
</dbReference>
<dbReference type="HOGENOM" id="CLU_007220_2_2_9"/>
<dbReference type="OrthoDB" id="9775440at2"/>
<dbReference type="Proteomes" id="UP000000773">
    <property type="component" value="Chromosome"/>
</dbReference>
<dbReference type="GO" id="GO:0005829">
    <property type="term" value="C:cytosol"/>
    <property type="evidence" value="ECO:0007669"/>
    <property type="project" value="TreeGrafter"/>
</dbReference>
<dbReference type="GO" id="GO:0004814">
    <property type="term" value="F:arginine-tRNA ligase activity"/>
    <property type="evidence" value="ECO:0007669"/>
    <property type="project" value="InterPro"/>
</dbReference>
<dbReference type="GO" id="GO:0005524">
    <property type="term" value="F:ATP binding"/>
    <property type="evidence" value="ECO:0007669"/>
    <property type="project" value="UniProtKB-UniRule"/>
</dbReference>
<dbReference type="GO" id="GO:0004820">
    <property type="term" value="F:glycine-tRNA ligase activity"/>
    <property type="evidence" value="ECO:0007669"/>
    <property type="project" value="UniProtKB-UniRule"/>
</dbReference>
<dbReference type="GO" id="GO:0006420">
    <property type="term" value="P:arginyl-tRNA aminoacylation"/>
    <property type="evidence" value="ECO:0007669"/>
    <property type="project" value="InterPro"/>
</dbReference>
<dbReference type="GO" id="GO:0006426">
    <property type="term" value="P:glycyl-tRNA aminoacylation"/>
    <property type="evidence" value="ECO:0007669"/>
    <property type="project" value="UniProtKB-UniRule"/>
</dbReference>
<dbReference type="HAMAP" id="MF_00255">
    <property type="entry name" value="Gly_tRNA_synth_beta"/>
    <property type="match status" value="1"/>
</dbReference>
<dbReference type="InterPro" id="IPR008909">
    <property type="entry name" value="DALR_anticod-bd"/>
</dbReference>
<dbReference type="InterPro" id="IPR015944">
    <property type="entry name" value="Gly-tRNA-synth_bsu"/>
</dbReference>
<dbReference type="InterPro" id="IPR006194">
    <property type="entry name" value="Gly-tRNA-synth_heterodimer"/>
</dbReference>
<dbReference type="NCBIfam" id="TIGR00211">
    <property type="entry name" value="glyS"/>
    <property type="match status" value="1"/>
</dbReference>
<dbReference type="PANTHER" id="PTHR30075:SF2">
    <property type="entry name" value="GLYCINE--TRNA LIGASE, CHLOROPLASTIC_MITOCHONDRIAL 2"/>
    <property type="match status" value="1"/>
</dbReference>
<dbReference type="PANTHER" id="PTHR30075">
    <property type="entry name" value="GLYCYL-TRNA SYNTHETASE"/>
    <property type="match status" value="1"/>
</dbReference>
<dbReference type="Pfam" id="PF05746">
    <property type="entry name" value="DALR_1"/>
    <property type="match status" value="1"/>
</dbReference>
<dbReference type="Pfam" id="PF02092">
    <property type="entry name" value="tRNA_synt_2f"/>
    <property type="match status" value="1"/>
</dbReference>
<dbReference type="PRINTS" id="PR01045">
    <property type="entry name" value="TRNASYNTHGB"/>
</dbReference>
<dbReference type="SUPFAM" id="SSF109604">
    <property type="entry name" value="HD-domain/PDEase-like"/>
    <property type="match status" value="1"/>
</dbReference>
<dbReference type="PROSITE" id="PS50861">
    <property type="entry name" value="AA_TRNA_LIGASE_II_GLYAB"/>
    <property type="match status" value="1"/>
</dbReference>
<sequence>MAHNYLLEIGLEEIPAHVVTPSIKQLVQKVTAFLKENRLTYDSIDHFSTPRRLAIRINGLGDQQPDIEEDAKGPARKIAQDADGNWTKAAIGFTRGQGLTVDDITFKTIKGTDYVYVHKLIKGKMTKEILTGLKEVVESINFPTMMKWANFDFKYVRPIRWLVSILDEEVLPFSILDVTAGRRTEGHRFLGEAVELANAEEYEAKLHDQFVIVDADERKQLISNQIKAIAESNRWNVTPNPGLLEEVNNLVEWPTAFNGGFDEKYLAIPEEVLITSMRDHQRFFFVRDQAGKLLPNFISVRNGNEEFIENVVRGNEKVLTARLEDAAFFYEEDQKHDINYYVDRLKKVSFHDKIGSMYEKLQRVNSIAKVIGNTLNLNQTELDDIDRATMIYKFDLVTGMVGEFSELQGVMGEKYAQLNGENQAVAQAIREHYMPNSAEGDLPESVTGAVVALADKFDNIFSFFSAGMIPSGSNDPYALRRHAYGIVRILNSRDWQLDLNQFKSQVKTELAENGTAFGVDVDQNFDQVLNFFNDRIKQLLDHQKISHDIVETVLTGNNHDVTEIIEAAQVLADAKASSTFKDDIEALTRVQRIATKNEESGELNVDPQLFNNASEGELFDQIIKIEAANNLTMSQLFAKLCELTPAISKYFDATMVMDKDENIKRNRLNMMSRLANLILKIGDLTNVLVK</sequence>
<organism>
    <name type="scientific">Pediococcus pentosaceus (strain ATCC 25745 / CCUG 21536 / LMG 10740 / 183-1w)</name>
    <dbReference type="NCBI Taxonomy" id="278197"/>
    <lineage>
        <taxon>Bacteria</taxon>
        <taxon>Bacillati</taxon>
        <taxon>Bacillota</taxon>
        <taxon>Bacilli</taxon>
        <taxon>Lactobacillales</taxon>
        <taxon>Lactobacillaceae</taxon>
        <taxon>Pediococcus</taxon>
    </lineage>
</organism>
<gene>
    <name evidence="1" type="primary">glyS</name>
    <name type="ordered locus">PEPE_1101</name>
</gene>
<accession>Q03F66</accession>
<reference key="1">
    <citation type="journal article" date="2006" name="Proc. Natl. Acad. Sci. U.S.A.">
        <title>Comparative genomics of the lactic acid bacteria.</title>
        <authorList>
            <person name="Makarova K.S."/>
            <person name="Slesarev A."/>
            <person name="Wolf Y.I."/>
            <person name="Sorokin A."/>
            <person name="Mirkin B."/>
            <person name="Koonin E.V."/>
            <person name="Pavlov A."/>
            <person name="Pavlova N."/>
            <person name="Karamychev V."/>
            <person name="Polouchine N."/>
            <person name="Shakhova V."/>
            <person name="Grigoriev I."/>
            <person name="Lou Y."/>
            <person name="Rohksar D."/>
            <person name="Lucas S."/>
            <person name="Huang K."/>
            <person name="Goodstein D.M."/>
            <person name="Hawkins T."/>
            <person name="Plengvidhya V."/>
            <person name="Welker D."/>
            <person name="Hughes J."/>
            <person name="Goh Y."/>
            <person name="Benson A."/>
            <person name="Baldwin K."/>
            <person name="Lee J.-H."/>
            <person name="Diaz-Muniz I."/>
            <person name="Dosti B."/>
            <person name="Smeianov V."/>
            <person name="Wechter W."/>
            <person name="Barabote R."/>
            <person name="Lorca G."/>
            <person name="Altermann E."/>
            <person name="Barrangou R."/>
            <person name="Ganesan B."/>
            <person name="Xie Y."/>
            <person name="Rawsthorne H."/>
            <person name="Tamir D."/>
            <person name="Parker C."/>
            <person name="Breidt F."/>
            <person name="Broadbent J.R."/>
            <person name="Hutkins R."/>
            <person name="O'Sullivan D."/>
            <person name="Steele J."/>
            <person name="Unlu G."/>
            <person name="Saier M.H. Jr."/>
            <person name="Klaenhammer T."/>
            <person name="Richardson P."/>
            <person name="Kozyavkin S."/>
            <person name="Weimer B.C."/>
            <person name="Mills D.A."/>
        </authorList>
    </citation>
    <scope>NUCLEOTIDE SEQUENCE [LARGE SCALE GENOMIC DNA]</scope>
    <source>
        <strain>ATCC 25745 / CCUG 21536 / LMG 10740 / 183-1w</strain>
    </source>
</reference>
<proteinExistence type="inferred from homology"/>
<evidence type="ECO:0000255" key="1">
    <source>
        <dbReference type="HAMAP-Rule" id="MF_00255"/>
    </source>
</evidence>